<comment type="subcellular location">
    <subcellularLocation>
        <location evidence="1">Cell membrane</location>
        <topology evidence="1">Multi-pass membrane protein</topology>
    </subcellularLocation>
</comment>
<comment type="similarity">
    <text evidence="1">Belongs to the UPF0756 family.</text>
</comment>
<comment type="sequence caution" evidence="2">
    <conflict type="erroneous initiation">
        <sequence resource="EMBL-CDS" id="CAP00956"/>
    </conflict>
</comment>
<keyword id="KW-1003">Cell membrane</keyword>
<keyword id="KW-0472">Membrane</keyword>
<keyword id="KW-0812">Transmembrane</keyword>
<keyword id="KW-1133">Transmembrane helix</keyword>
<proteinExistence type="inferred from homology"/>
<dbReference type="EMBL" id="CU468230">
    <property type="protein sequence ID" value="CAP00956.1"/>
    <property type="status" value="ALT_INIT"/>
    <property type="molecule type" value="Genomic_DNA"/>
</dbReference>
<dbReference type="KEGG" id="abm:ABSDF1616"/>
<dbReference type="HOGENOM" id="CLU_125889_0_0_6"/>
<dbReference type="Proteomes" id="UP000001741">
    <property type="component" value="Chromosome"/>
</dbReference>
<dbReference type="GO" id="GO:0005886">
    <property type="term" value="C:plasma membrane"/>
    <property type="evidence" value="ECO:0007669"/>
    <property type="project" value="UniProtKB-SubCell"/>
</dbReference>
<dbReference type="HAMAP" id="MF_01874">
    <property type="entry name" value="UPF0756"/>
    <property type="match status" value="1"/>
</dbReference>
<dbReference type="InterPro" id="IPR007382">
    <property type="entry name" value="UPF0756_TM"/>
</dbReference>
<dbReference type="PANTHER" id="PTHR38452">
    <property type="entry name" value="UPF0756 MEMBRANE PROTEIN YEAL"/>
    <property type="match status" value="1"/>
</dbReference>
<dbReference type="PANTHER" id="PTHR38452:SF1">
    <property type="entry name" value="UPF0756 MEMBRANE PROTEIN YEAL"/>
    <property type="match status" value="1"/>
</dbReference>
<dbReference type="Pfam" id="PF04284">
    <property type="entry name" value="DUF441"/>
    <property type="match status" value="1"/>
</dbReference>
<evidence type="ECO:0000255" key="1">
    <source>
        <dbReference type="HAMAP-Rule" id="MF_01874"/>
    </source>
</evidence>
<evidence type="ECO:0000305" key="2"/>
<feature type="chain" id="PRO_0000388810" description="UPF0756 membrane protein ABSDF1616">
    <location>
        <begin position="1"/>
        <end position="150"/>
    </location>
</feature>
<feature type="transmembrane region" description="Helical" evidence="1">
    <location>
        <begin position="1"/>
        <end position="21"/>
    </location>
</feature>
<feature type="transmembrane region" description="Helical" evidence="1">
    <location>
        <begin position="45"/>
        <end position="65"/>
    </location>
</feature>
<feature type="transmembrane region" description="Helical" evidence="1">
    <location>
        <begin position="83"/>
        <end position="103"/>
    </location>
</feature>
<feature type="transmembrane region" description="Helical" evidence="1">
    <location>
        <begin position="115"/>
        <end position="135"/>
    </location>
</feature>
<name>Y1616_ACIBS</name>
<reference key="1">
    <citation type="journal article" date="2008" name="PLoS ONE">
        <title>Comparative analysis of Acinetobacters: three genomes for three lifestyles.</title>
        <authorList>
            <person name="Vallenet D."/>
            <person name="Nordmann P."/>
            <person name="Barbe V."/>
            <person name="Poirel L."/>
            <person name="Mangenot S."/>
            <person name="Bataille E."/>
            <person name="Dossat C."/>
            <person name="Gas S."/>
            <person name="Kreimeyer A."/>
            <person name="Lenoble P."/>
            <person name="Oztas S."/>
            <person name="Poulain J."/>
            <person name="Segurens B."/>
            <person name="Robert C."/>
            <person name="Abergel C."/>
            <person name="Claverie J.-M."/>
            <person name="Raoult D."/>
            <person name="Medigue C."/>
            <person name="Weissenbach J."/>
            <person name="Cruveiller S."/>
        </authorList>
    </citation>
    <scope>NUCLEOTIDE SEQUENCE [LARGE SCALE GENOMIC DNA]</scope>
    <source>
        <strain>SDF</strain>
    </source>
</reference>
<protein>
    <recommendedName>
        <fullName evidence="1">UPF0756 membrane protein ABSDF1616</fullName>
    </recommendedName>
</protein>
<accession>B0VM56</accession>
<gene>
    <name type="ordered locus">ABSDF1616</name>
</gene>
<sequence>MLAQFDVNLVVLLVLLICGLLSQNAAVTIAAGVLIVIKITPLNQFFPYIQAHGLNLGILILTIGVLTPIASGKLSGESILKSFISFKSLVAIAIGLLVAWLGGRGVKLMSSQPDVVAGLLIGTVAGVALLRGVPVGPLIAAGLLSLFIGK</sequence>
<organism>
    <name type="scientific">Acinetobacter baumannii (strain SDF)</name>
    <dbReference type="NCBI Taxonomy" id="509170"/>
    <lineage>
        <taxon>Bacteria</taxon>
        <taxon>Pseudomonadati</taxon>
        <taxon>Pseudomonadota</taxon>
        <taxon>Gammaproteobacteria</taxon>
        <taxon>Moraxellales</taxon>
        <taxon>Moraxellaceae</taxon>
        <taxon>Acinetobacter</taxon>
        <taxon>Acinetobacter calcoaceticus/baumannii complex</taxon>
    </lineage>
</organism>